<sequence>MTRLASGVLITLLVALAGIADGSRDIAGDILKLPSEAYRFFHNGGGGAKVNDDDDSVGTRWAVLLAGSNGFWNYRHQADICHAYQLLRKGGLKDENIIVFMYDDIAFNEENPRPGVIINHPHGDDVYKGVPKDYTGEDVTVEKFFAVVLGNKTALTGGSGKVVDSGPNDHIFIFYSDHGGPGVLGMPTSRYIYADELIDVLKKKHASGNYKSLVFYLEACESGSIFEGLLLEGLNIYATTASNAEESSWGTYCPGEIPGPPPEYSTCLGDLYSIAWMEDSDIHNLRTETLHQQYELVKTRTASYNSYGSHVMQYGDIGLSKNNLFTYLGTNPANDNYTFVDENSLRPASKAVNQRDADLLHFWDKYRKAPEGTPRKAEAQKQFFEAMSHRMHVDHSIKLIGKLLFGIEKGPEILNTVRPAGQPLVDDWGCLKSLVRTFESHCGALSQYGMKHMRSLANICNTGIGKEKMAEASAQACENIPSGPWSSLDKGFSA</sequence>
<proteinExistence type="evidence at transcript level"/>
<evidence type="ECO:0000250" key="1">
    <source>
        <dbReference type="UniProtKB" id="O89017"/>
    </source>
</evidence>
<evidence type="ECO:0000250" key="2">
    <source>
        <dbReference type="UniProtKB" id="P49046"/>
    </source>
</evidence>
<evidence type="ECO:0000250" key="3">
    <source>
        <dbReference type="UniProtKB" id="Q84LM2"/>
    </source>
</evidence>
<evidence type="ECO:0000255" key="4"/>
<evidence type="ECO:0000255" key="5">
    <source>
        <dbReference type="PROSITE-ProRule" id="PRU00498"/>
    </source>
</evidence>
<evidence type="ECO:0000305" key="6"/>
<feature type="signal peptide" evidence="4">
    <location>
        <begin position="1"/>
        <end position="20"/>
    </location>
</feature>
<feature type="chain" id="PRO_0000026516" description="Vacuolar-processing enzyme">
    <location>
        <begin position="21"/>
        <end position="494"/>
    </location>
</feature>
<feature type="active site" evidence="1">
    <location>
        <position position="178"/>
    </location>
</feature>
<feature type="active site" description="Nucleophile" evidence="1">
    <location>
        <position position="220"/>
    </location>
</feature>
<feature type="site" description="Required for post-translational maturation and enzyme activity" evidence="3">
    <location>
        <position position="267"/>
    </location>
</feature>
<feature type="glycosylation site" description="N-linked (GlcNAc...) asparagine" evidence="5">
    <location>
        <position position="151"/>
    </location>
</feature>
<feature type="glycosylation site" description="N-linked (GlcNAc...) asparagine" evidence="5">
    <location>
        <position position="336"/>
    </location>
</feature>
<feature type="disulfide bond" evidence="2">
    <location>
        <begin position="253"/>
        <end position="267"/>
    </location>
</feature>
<feature type="disulfide bond" evidence="2">
    <location>
        <begin position="430"/>
        <end position="460"/>
    </location>
</feature>
<feature type="disulfide bond" evidence="2">
    <location>
        <begin position="442"/>
        <end position="477"/>
    </location>
</feature>
<organism>
    <name type="scientific">Citrus sinensis</name>
    <name type="common">Sweet orange</name>
    <name type="synonym">Citrus aurantium var. sinensis</name>
    <dbReference type="NCBI Taxonomy" id="2711"/>
    <lineage>
        <taxon>Eukaryota</taxon>
        <taxon>Viridiplantae</taxon>
        <taxon>Streptophyta</taxon>
        <taxon>Embryophyta</taxon>
        <taxon>Tracheophyta</taxon>
        <taxon>Spermatophyta</taxon>
        <taxon>Magnoliopsida</taxon>
        <taxon>eudicotyledons</taxon>
        <taxon>Gunneridae</taxon>
        <taxon>Pentapetalae</taxon>
        <taxon>rosids</taxon>
        <taxon>malvids</taxon>
        <taxon>Sapindales</taxon>
        <taxon>Rutaceae</taxon>
        <taxon>Aurantioideae</taxon>
        <taxon>Citrus</taxon>
    </lineage>
</organism>
<reference key="1">
    <citation type="journal article" date="1995" name="Plant Physiol.">
        <title>A putative vacuolar processing protease is regulated by ethylene and also during fruit ripening in Citrus fruit.</title>
        <authorList>
            <person name="Alonso J.M."/>
            <person name="Granell A."/>
        </authorList>
    </citation>
    <scope>NUCLEOTIDE SEQUENCE [MRNA]</scope>
    <source>
        <strain>cv. Washington Navel</strain>
        <tissue>Flavedo</tissue>
    </source>
</reference>
<comment type="function">
    <text>Asparagine-specific endopeptidase that may be involved in processing of proteins targeted to vacuoles that accumulate during ethylene-regulated processes such as flower opening and flavedo degreening.</text>
</comment>
<comment type="tissue specificity">
    <text>High levels are seen in the flowers, a lower level expression is seen in the leaves, while very low levels are seen in the stems and roots.</text>
</comment>
<comment type="developmental stage">
    <text>The levels are low in green fruits but accumulate with color change occurring during ripening, reaching maximum levels in fully colored fruit. The levels increase during flower development and show highest levels in flowers at anthesis.</text>
</comment>
<comment type="similarity">
    <text evidence="6">Belongs to the peptidase C13 family.</text>
</comment>
<keyword id="KW-1015">Disulfide bond</keyword>
<keyword id="KW-0325">Glycoprotein</keyword>
<keyword id="KW-0378">Hydrolase</keyword>
<keyword id="KW-0645">Protease</keyword>
<keyword id="KW-0732">Signal</keyword>
<keyword id="KW-0788">Thiol protease</keyword>
<accession>P49043</accession>
<protein>
    <recommendedName>
        <fullName>Vacuolar-processing enzyme</fullName>
        <shortName>VPE</shortName>
        <ecNumber>3.4.22.-</ecNumber>
    </recommendedName>
</protein>
<dbReference type="EC" id="3.4.22.-"/>
<dbReference type="EMBL" id="Z47793">
    <property type="protein sequence ID" value="CAA87720.1"/>
    <property type="molecule type" value="mRNA"/>
</dbReference>
<dbReference type="PIR" id="S51117">
    <property type="entry name" value="S51117"/>
</dbReference>
<dbReference type="RefSeq" id="NP_001275777.1">
    <property type="nucleotide sequence ID" value="NM_001288848.1"/>
</dbReference>
<dbReference type="SMR" id="P49043"/>
<dbReference type="MEROPS" id="C13.002"/>
<dbReference type="PaxDb" id="2711-XP_006475965.1"/>
<dbReference type="GeneID" id="102612763"/>
<dbReference type="KEGG" id="cit:102612763"/>
<dbReference type="eggNOG" id="KOG1348">
    <property type="taxonomic scope" value="Eukaryota"/>
</dbReference>
<dbReference type="OrthoDB" id="871793at71240"/>
<dbReference type="GO" id="GO:0004197">
    <property type="term" value="F:cysteine-type endopeptidase activity"/>
    <property type="evidence" value="ECO:0007669"/>
    <property type="project" value="InterPro"/>
</dbReference>
<dbReference type="GO" id="GO:0051603">
    <property type="term" value="P:proteolysis involved in protein catabolic process"/>
    <property type="evidence" value="ECO:0007669"/>
    <property type="project" value="InterPro"/>
</dbReference>
<dbReference type="CDD" id="cd21115">
    <property type="entry name" value="legumain_C"/>
    <property type="match status" value="1"/>
</dbReference>
<dbReference type="FunFam" id="1.10.132.130:FF:000001">
    <property type="entry name" value="Vacuolar-processing enzyme beta-isozyme"/>
    <property type="match status" value="1"/>
</dbReference>
<dbReference type="FunFam" id="3.40.50.1460:FF:000005">
    <property type="entry name" value="Vacuolar-processing enzyme beta-isozyme"/>
    <property type="match status" value="1"/>
</dbReference>
<dbReference type="Gene3D" id="1.10.132.130">
    <property type="match status" value="1"/>
</dbReference>
<dbReference type="Gene3D" id="3.40.50.1460">
    <property type="match status" value="1"/>
</dbReference>
<dbReference type="InterPro" id="IPR043577">
    <property type="entry name" value="AE"/>
</dbReference>
<dbReference type="InterPro" id="IPR048501">
    <property type="entry name" value="Legum_prodom"/>
</dbReference>
<dbReference type="InterPro" id="IPR046427">
    <property type="entry name" value="Legumain_prodom_sf"/>
</dbReference>
<dbReference type="InterPro" id="IPR001096">
    <property type="entry name" value="Peptidase_C13"/>
</dbReference>
<dbReference type="PANTHER" id="PTHR12000">
    <property type="entry name" value="HEMOGLOBINASE FAMILY MEMBER"/>
    <property type="match status" value="1"/>
</dbReference>
<dbReference type="PANTHER" id="PTHR12000:SF50">
    <property type="entry name" value="VACUOLAR-PROCESSING ENZYME GAMMA-ISOZYME"/>
    <property type="match status" value="1"/>
</dbReference>
<dbReference type="Pfam" id="PF20985">
    <property type="entry name" value="Legum_prodom"/>
    <property type="match status" value="1"/>
</dbReference>
<dbReference type="Pfam" id="PF01650">
    <property type="entry name" value="Peptidase_C13"/>
    <property type="match status" value="1"/>
</dbReference>
<dbReference type="PIRSF" id="PIRSF500139">
    <property type="entry name" value="AE"/>
    <property type="match status" value="1"/>
</dbReference>
<dbReference type="PIRSF" id="PIRSF019663">
    <property type="entry name" value="Legumain"/>
    <property type="match status" value="1"/>
</dbReference>
<dbReference type="PRINTS" id="PR00776">
    <property type="entry name" value="HEMOGLOBNASE"/>
</dbReference>
<name>VPE_CITSI</name>